<accession>Q8XEC3</accession>
<accession>Q7A934</accession>
<comment type="function">
    <text evidence="1">Removes the pyruvyl group from chorismate, with concomitant aromatization of the ring, to provide 4-hydroxybenzoate (4HB) for the ubiquinone pathway.</text>
</comment>
<comment type="catalytic activity">
    <reaction evidence="1">
        <text>chorismate = 4-hydroxybenzoate + pyruvate</text>
        <dbReference type="Rhea" id="RHEA:16505"/>
        <dbReference type="ChEBI" id="CHEBI:15361"/>
        <dbReference type="ChEBI" id="CHEBI:17879"/>
        <dbReference type="ChEBI" id="CHEBI:29748"/>
        <dbReference type="EC" id="4.1.3.40"/>
    </reaction>
</comment>
<comment type="pathway">
    <text evidence="1">Cofactor biosynthesis; ubiquinone biosynthesis.</text>
</comment>
<comment type="subunit">
    <text evidence="1">Monomer.</text>
</comment>
<comment type="subcellular location">
    <subcellularLocation>
        <location evidence="1">Cytoplasm</location>
    </subcellularLocation>
</comment>
<comment type="similarity">
    <text evidence="1">Belongs to the UbiC family.</text>
</comment>
<comment type="sequence caution" evidence="2">
    <conflict type="erroneous initiation">
        <sequence resource="EMBL-CDS" id="AAG59238"/>
    </conflict>
    <text>Extended N-terminus.</text>
</comment>
<comment type="sequence caution" evidence="2">
    <conflict type="erroneous initiation">
        <sequence resource="EMBL-CDS" id="BAB38445"/>
    </conflict>
    <text>Extended N-terminus.</text>
</comment>
<proteinExistence type="inferred from homology"/>
<name>UBIC_ECO57</name>
<evidence type="ECO:0000255" key="1">
    <source>
        <dbReference type="HAMAP-Rule" id="MF_01632"/>
    </source>
</evidence>
<evidence type="ECO:0000305" key="2"/>
<sequence>MSHPALTQLRALRYCKEIPALEPQLLDWLLLEDSMTKRFEQQGKTVSVTMIREGFVEQNEIPEELPLLPKESRYWLREILLCADGEPWLAGRTVVPVSTLSGPELALQKLGKTPLGRYLFTSSTLTRDFIEIGRDAGLWGRRSRLRLSGKPLLLTELFLPASPLY</sequence>
<reference key="1">
    <citation type="journal article" date="2001" name="Nature">
        <title>Genome sequence of enterohaemorrhagic Escherichia coli O157:H7.</title>
        <authorList>
            <person name="Perna N.T."/>
            <person name="Plunkett G. III"/>
            <person name="Burland V."/>
            <person name="Mau B."/>
            <person name="Glasner J.D."/>
            <person name="Rose D.J."/>
            <person name="Mayhew G.F."/>
            <person name="Evans P.S."/>
            <person name="Gregor J."/>
            <person name="Kirkpatrick H.A."/>
            <person name="Posfai G."/>
            <person name="Hackett J."/>
            <person name="Klink S."/>
            <person name="Boutin A."/>
            <person name="Shao Y."/>
            <person name="Miller L."/>
            <person name="Grotbeck E.J."/>
            <person name="Davis N.W."/>
            <person name="Lim A."/>
            <person name="Dimalanta E.T."/>
            <person name="Potamousis K."/>
            <person name="Apodaca J."/>
            <person name="Anantharaman T.S."/>
            <person name="Lin J."/>
            <person name="Yen G."/>
            <person name="Schwartz D.C."/>
            <person name="Welch R.A."/>
            <person name="Blattner F.R."/>
        </authorList>
    </citation>
    <scope>NUCLEOTIDE SEQUENCE [LARGE SCALE GENOMIC DNA]</scope>
    <source>
        <strain>O157:H7 / EDL933 / ATCC 700927 / EHEC</strain>
    </source>
</reference>
<reference key="2">
    <citation type="journal article" date="2001" name="DNA Res.">
        <title>Complete genome sequence of enterohemorrhagic Escherichia coli O157:H7 and genomic comparison with a laboratory strain K-12.</title>
        <authorList>
            <person name="Hayashi T."/>
            <person name="Makino K."/>
            <person name="Ohnishi M."/>
            <person name="Kurokawa K."/>
            <person name="Ishii K."/>
            <person name="Yokoyama K."/>
            <person name="Han C.-G."/>
            <person name="Ohtsubo E."/>
            <person name="Nakayama K."/>
            <person name="Murata T."/>
            <person name="Tanaka M."/>
            <person name="Tobe T."/>
            <person name="Iida T."/>
            <person name="Takami H."/>
            <person name="Honda T."/>
            <person name="Sasakawa C."/>
            <person name="Ogasawara N."/>
            <person name="Yasunaga T."/>
            <person name="Kuhara S."/>
            <person name="Shiba T."/>
            <person name="Hattori M."/>
            <person name="Shinagawa H."/>
        </authorList>
    </citation>
    <scope>NUCLEOTIDE SEQUENCE [LARGE SCALE GENOMIC DNA]</scope>
    <source>
        <strain>O157:H7 / Sakai / RIMD 0509952 / EHEC</strain>
    </source>
</reference>
<protein>
    <recommendedName>
        <fullName evidence="1">Chorismate pyruvate-lyase</fullName>
        <shortName evidence="1">CL</shortName>
        <shortName evidence="1">CPL</shortName>
        <ecNumber evidence="1">4.1.3.40</ecNumber>
    </recommendedName>
</protein>
<dbReference type="EC" id="4.1.3.40" evidence="1"/>
<dbReference type="EMBL" id="AE005174">
    <property type="protein sequence ID" value="AAG59238.1"/>
    <property type="status" value="ALT_INIT"/>
    <property type="molecule type" value="Genomic_DNA"/>
</dbReference>
<dbReference type="EMBL" id="BA000007">
    <property type="protein sequence ID" value="BAB38445.1"/>
    <property type="status" value="ALT_INIT"/>
    <property type="molecule type" value="Genomic_DNA"/>
</dbReference>
<dbReference type="PIR" id="B86097">
    <property type="entry name" value="B86097"/>
</dbReference>
<dbReference type="PIR" id="F91256">
    <property type="entry name" value="F91256"/>
</dbReference>
<dbReference type="RefSeq" id="NP_313049.2">
    <property type="nucleotide sequence ID" value="NC_002695.1"/>
</dbReference>
<dbReference type="RefSeq" id="WP_001301929.1">
    <property type="nucleotide sequence ID" value="NZ_VOAI01000027.1"/>
</dbReference>
<dbReference type="SMR" id="Q8XEC3"/>
<dbReference type="STRING" id="155864.Z5638"/>
<dbReference type="GeneID" id="914312"/>
<dbReference type="KEGG" id="ece:Z5638"/>
<dbReference type="KEGG" id="ecs:ECs_5022"/>
<dbReference type="PATRIC" id="fig|386585.9.peg.5245"/>
<dbReference type="eggNOG" id="COG3161">
    <property type="taxonomic scope" value="Bacteria"/>
</dbReference>
<dbReference type="HOGENOM" id="CLU_096824_1_0_6"/>
<dbReference type="OMA" id="ELWGRRS"/>
<dbReference type="UniPathway" id="UPA00232"/>
<dbReference type="Proteomes" id="UP000000558">
    <property type="component" value="Chromosome"/>
</dbReference>
<dbReference type="Proteomes" id="UP000002519">
    <property type="component" value="Chromosome"/>
</dbReference>
<dbReference type="GO" id="GO:0005829">
    <property type="term" value="C:cytosol"/>
    <property type="evidence" value="ECO:0007669"/>
    <property type="project" value="TreeGrafter"/>
</dbReference>
<dbReference type="GO" id="GO:0008813">
    <property type="term" value="F:chorismate lyase activity"/>
    <property type="evidence" value="ECO:0007669"/>
    <property type="project" value="UniProtKB-UniRule"/>
</dbReference>
<dbReference type="GO" id="GO:0042866">
    <property type="term" value="P:pyruvate biosynthetic process"/>
    <property type="evidence" value="ECO:0007669"/>
    <property type="project" value="UniProtKB-UniRule"/>
</dbReference>
<dbReference type="GO" id="GO:0006744">
    <property type="term" value="P:ubiquinone biosynthetic process"/>
    <property type="evidence" value="ECO:0007669"/>
    <property type="project" value="UniProtKB-UniRule"/>
</dbReference>
<dbReference type="FunFam" id="3.40.1410.10:FF:000002">
    <property type="entry name" value="Chorismate pyruvate-lyase"/>
    <property type="match status" value="1"/>
</dbReference>
<dbReference type="Gene3D" id="3.40.1410.10">
    <property type="entry name" value="Chorismate lyase-like"/>
    <property type="match status" value="1"/>
</dbReference>
<dbReference type="HAMAP" id="MF_01632">
    <property type="entry name" value="UbiC"/>
    <property type="match status" value="1"/>
</dbReference>
<dbReference type="InterPro" id="IPR007440">
    <property type="entry name" value="Chorismate--pyruvate_lyase"/>
</dbReference>
<dbReference type="InterPro" id="IPR028978">
    <property type="entry name" value="Chorismate_lyase_/UTRA_dom_sf"/>
</dbReference>
<dbReference type="NCBIfam" id="NF008656">
    <property type="entry name" value="PRK11655.1"/>
    <property type="match status" value="1"/>
</dbReference>
<dbReference type="PANTHER" id="PTHR38683">
    <property type="entry name" value="CHORISMATE PYRUVATE-LYASE"/>
    <property type="match status" value="1"/>
</dbReference>
<dbReference type="PANTHER" id="PTHR38683:SF1">
    <property type="entry name" value="CHORISMATE PYRUVATE-LYASE"/>
    <property type="match status" value="1"/>
</dbReference>
<dbReference type="Pfam" id="PF04345">
    <property type="entry name" value="Chor_lyase"/>
    <property type="match status" value="1"/>
</dbReference>
<dbReference type="SUPFAM" id="SSF64288">
    <property type="entry name" value="Chorismate lyase-like"/>
    <property type="match status" value="1"/>
</dbReference>
<gene>
    <name evidence="1" type="primary">ubiC</name>
    <name type="ordered locus">Z5638</name>
    <name type="ordered locus">ECs5022</name>
</gene>
<keyword id="KW-0963">Cytoplasm</keyword>
<keyword id="KW-0456">Lyase</keyword>
<keyword id="KW-0670">Pyruvate</keyword>
<keyword id="KW-1185">Reference proteome</keyword>
<keyword id="KW-0831">Ubiquinone biosynthesis</keyword>
<feature type="chain" id="PRO_0000240546" description="Chorismate pyruvate-lyase">
    <location>
        <begin position="1"/>
        <end position="165"/>
    </location>
</feature>
<feature type="binding site" evidence="1">
    <location>
        <position position="35"/>
    </location>
    <ligand>
        <name>substrate</name>
    </ligand>
</feature>
<feature type="binding site" evidence="1">
    <location>
        <position position="77"/>
    </location>
    <ligand>
        <name>substrate</name>
    </ligand>
</feature>
<feature type="binding site" evidence="1">
    <location>
        <position position="115"/>
    </location>
    <ligand>
        <name>substrate</name>
    </ligand>
</feature>
<feature type="binding site" evidence="1">
    <location>
        <position position="156"/>
    </location>
    <ligand>
        <name>substrate</name>
    </ligand>
</feature>
<feature type="sequence conflict" description="In Ref. 2; BAB38445." evidence="2" ref="2">
    <original>A</original>
    <variation>T</variation>
    <location>
        <position position="161"/>
    </location>
</feature>
<organism>
    <name type="scientific">Escherichia coli O157:H7</name>
    <dbReference type="NCBI Taxonomy" id="83334"/>
    <lineage>
        <taxon>Bacteria</taxon>
        <taxon>Pseudomonadati</taxon>
        <taxon>Pseudomonadota</taxon>
        <taxon>Gammaproteobacteria</taxon>
        <taxon>Enterobacterales</taxon>
        <taxon>Enterobacteriaceae</taxon>
        <taxon>Escherichia</taxon>
    </lineage>
</organism>